<sequence>FVVETENQLMSQGGRYYILPVIYGKGGGLG</sequence>
<keyword id="KW-0903">Direct protein sequencing</keyword>
<keyword id="KW-0481">Metalloenzyme inhibitor</keyword>
<keyword id="KW-0483">Metalloprotease inhibitor</keyword>
<keyword id="KW-0646">Protease inhibitor</keyword>
<keyword id="KW-0722">Serine protease inhibitor</keyword>
<evidence type="ECO:0000269" key="1">
    <source>
    </source>
</evidence>
<evidence type="ECO:0000303" key="2">
    <source>
    </source>
</evidence>
<evidence type="ECO:0000305" key="3"/>
<protein>
    <recommendedName>
        <fullName>Proteinase inhibitor CeKI</fullName>
    </recommendedName>
</protein>
<feature type="chain" id="PRO_0000232435" description="Proteinase inhibitor CeKI" evidence="1">
    <location>
        <begin position="1"/>
        <end position="30" status="greater than"/>
    </location>
</feature>
<feature type="non-terminal residue" evidence="2">
    <location>
        <position position="30"/>
    </location>
</feature>
<proteinExistence type="evidence at protein level"/>
<name>CEKI_PAUEC</name>
<comment type="function">
    <text evidence="1">Potent inhibitor of serine proteases plasma kallikrein, plasmin and coagulation factor XIIa. Weak inhibitor of serine proteases trypsin and coagulation factor Xa. Does not inhibit the serine proteases chymotrypsin, elastase or thrombin. Inhibits kinin release from HMW-kininogen by kallikrein in vitro.</text>
</comment>
<comment type="similarity">
    <text evidence="3">Belongs to the protease inhibitor I3 (leguminous Kunitz-type inhibitor) family.</text>
</comment>
<dbReference type="SMR" id="P84795"/>
<dbReference type="GO" id="GO:0004867">
    <property type="term" value="F:serine-type endopeptidase inhibitor activity"/>
    <property type="evidence" value="ECO:0000314"/>
    <property type="project" value="UniProtKB"/>
</dbReference>
<dbReference type="GO" id="GO:0030195">
    <property type="term" value="P:negative regulation of blood coagulation"/>
    <property type="evidence" value="ECO:0000314"/>
    <property type="project" value="UniProtKB"/>
</dbReference>
<dbReference type="InterPro" id="IPR011065">
    <property type="entry name" value="Kunitz_inhibitor_STI-like_sf"/>
</dbReference>
<dbReference type="SUPFAM" id="SSF50386">
    <property type="entry name" value="STI-like"/>
    <property type="match status" value="1"/>
</dbReference>
<accession>P84795</accession>
<reference evidence="3" key="1">
    <citation type="journal article" date="2004" name="Biol. Chem.">
        <title>A proteinase inhibitor from Caesalpinia echinata (pau-brasil) seeds for plasma kallikrein, plasmin and factor XIIa.</title>
        <authorList>
            <person name="Cruz-Silva I."/>
            <person name="Gozzo A.J."/>
            <person name="Nunes V.A."/>
            <person name="Carmona A.K."/>
            <person name="Faljoni-Alario A."/>
            <person name="Oliva M.L."/>
            <person name="Sampaio M.U."/>
            <person name="Sampaio C.A."/>
            <person name="Araujo M.S."/>
        </authorList>
    </citation>
    <scope>PROTEIN SEQUENCE</scope>
    <scope>FUNCTION</scope>
    <source>
        <tissue evidence="1">Seed</tissue>
    </source>
</reference>
<organism>
    <name type="scientific">Paubrasilia echinata</name>
    <name type="common">Pau Brasil</name>
    <name type="synonym">Caesalpinia echinata</name>
    <dbReference type="NCBI Taxonomy" id="372551"/>
    <lineage>
        <taxon>Eukaryota</taxon>
        <taxon>Viridiplantae</taxon>
        <taxon>Streptophyta</taxon>
        <taxon>Embryophyta</taxon>
        <taxon>Tracheophyta</taxon>
        <taxon>Spermatophyta</taxon>
        <taxon>Magnoliopsida</taxon>
        <taxon>eudicotyledons</taxon>
        <taxon>Gunneridae</taxon>
        <taxon>Pentapetalae</taxon>
        <taxon>rosids</taxon>
        <taxon>fabids</taxon>
        <taxon>Fabales</taxon>
        <taxon>Fabaceae</taxon>
        <taxon>Caesalpinioideae</taxon>
        <taxon>Caesalpinia clade</taxon>
        <taxon>Paubrasilia</taxon>
    </lineage>
</organism>